<reference key="1">
    <citation type="journal article" date="2002" name="J. Bacteriol.">
        <title>Whole-genome comparison of Mycobacterium tuberculosis clinical and laboratory strains.</title>
        <authorList>
            <person name="Fleischmann R.D."/>
            <person name="Alland D."/>
            <person name="Eisen J.A."/>
            <person name="Carpenter L."/>
            <person name="White O."/>
            <person name="Peterson J.D."/>
            <person name="DeBoy R.T."/>
            <person name="Dodson R.J."/>
            <person name="Gwinn M.L."/>
            <person name="Haft D.H."/>
            <person name="Hickey E.K."/>
            <person name="Kolonay J.F."/>
            <person name="Nelson W.C."/>
            <person name="Umayam L.A."/>
            <person name="Ermolaeva M.D."/>
            <person name="Salzberg S.L."/>
            <person name="Delcher A."/>
            <person name="Utterback T.R."/>
            <person name="Weidman J.F."/>
            <person name="Khouri H.M."/>
            <person name="Gill J."/>
            <person name="Mikula A."/>
            <person name="Bishai W."/>
            <person name="Jacobs W.R. Jr."/>
            <person name="Venter J.C."/>
            <person name="Fraser C.M."/>
        </authorList>
    </citation>
    <scope>NUCLEOTIDE SEQUENCE [LARGE SCALE GENOMIC DNA]</scope>
    <source>
        <strain>CDC 1551 / Oshkosh</strain>
    </source>
</reference>
<evidence type="ECO:0000250" key="1"/>
<evidence type="ECO:0000255" key="2"/>
<evidence type="ECO:0000305" key="3"/>
<comment type="function">
    <text evidence="1">Toxic component of a type II toxin-antitoxin (TA) system. An RNase. The cognate antitoxin is VapB8 (By similarity).</text>
</comment>
<comment type="cofactor">
    <cofactor evidence="3">
        <name>Mg(2+)</name>
        <dbReference type="ChEBI" id="CHEBI:18420"/>
    </cofactor>
</comment>
<comment type="similarity">
    <text evidence="3">Belongs to the PINc/VapC protein family.</text>
</comment>
<keyword id="KW-0378">Hydrolase</keyword>
<keyword id="KW-0460">Magnesium</keyword>
<keyword id="KW-0479">Metal-binding</keyword>
<keyword id="KW-0540">Nuclease</keyword>
<keyword id="KW-1185">Reference proteome</keyword>
<keyword id="KW-1277">Toxin-antitoxin system</keyword>
<dbReference type="EC" id="3.1.-.-"/>
<dbReference type="EMBL" id="AE000516">
    <property type="protein sequence ID" value="AAK44919.1"/>
    <property type="molecule type" value="Genomic_DNA"/>
</dbReference>
<dbReference type="PIR" id="D70535">
    <property type="entry name" value="D70535"/>
</dbReference>
<dbReference type="RefSeq" id="WP_003403405.1">
    <property type="nucleotide sequence ID" value="NZ_KK341227.1"/>
</dbReference>
<dbReference type="SMR" id="P9WFB0"/>
<dbReference type="KEGG" id="mtc:MT0693"/>
<dbReference type="PATRIC" id="fig|83331.31.peg.737"/>
<dbReference type="HOGENOM" id="CLU_118482_6_0_11"/>
<dbReference type="Proteomes" id="UP000001020">
    <property type="component" value="Chromosome"/>
</dbReference>
<dbReference type="GO" id="GO:0046872">
    <property type="term" value="F:metal ion binding"/>
    <property type="evidence" value="ECO:0007669"/>
    <property type="project" value="UniProtKB-KW"/>
</dbReference>
<dbReference type="GO" id="GO:0004518">
    <property type="term" value="F:nuclease activity"/>
    <property type="evidence" value="ECO:0007669"/>
    <property type="project" value="UniProtKB-KW"/>
</dbReference>
<dbReference type="Gene3D" id="3.40.50.1010">
    <property type="entry name" value="5'-nuclease"/>
    <property type="match status" value="1"/>
</dbReference>
<dbReference type="InterPro" id="IPR029060">
    <property type="entry name" value="PIN-like_dom_sf"/>
</dbReference>
<dbReference type="InterPro" id="IPR002716">
    <property type="entry name" value="PIN_dom"/>
</dbReference>
<dbReference type="InterPro" id="IPR050556">
    <property type="entry name" value="Type_II_TA_system_RNase"/>
</dbReference>
<dbReference type="PANTHER" id="PTHR33653">
    <property type="entry name" value="RIBONUCLEASE VAPC2"/>
    <property type="match status" value="1"/>
</dbReference>
<dbReference type="PANTHER" id="PTHR33653:SF1">
    <property type="entry name" value="RIBONUCLEASE VAPC2"/>
    <property type="match status" value="1"/>
</dbReference>
<dbReference type="Pfam" id="PF01850">
    <property type="entry name" value="PIN"/>
    <property type="match status" value="1"/>
</dbReference>
<dbReference type="SUPFAM" id="SSF88723">
    <property type="entry name" value="PIN domain-like"/>
    <property type="match status" value="1"/>
</dbReference>
<accession>P9WFB0</accession>
<accession>L0T768</accession>
<accession>O06774</accession>
<accession>Q7D9G5</accession>
<feature type="chain" id="PRO_0000428570" description="Ribonuclease VapC8">
    <location>
        <begin position="1"/>
        <end position="112"/>
    </location>
</feature>
<feature type="domain" description="PINc">
    <location>
        <begin position="10"/>
        <end position="109"/>
    </location>
</feature>
<feature type="binding site" evidence="2">
    <location>
        <position position="12"/>
    </location>
    <ligand>
        <name>Mg(2+)</name>
        <dbReference type="ChEBI" id="CHEBI:18420"/>
    </ligand>
</feature>
<feature type="binding site" evidence="2">
    <location>
        <position position="101"/>
    </location>
    <ligand>
        <name>Mg(2+)</name>
        <dbReference type="ChEBI" id="CHEBI:18420"/>
    </ligand>
</feature>
<proteinExistence type="inferred from homology"/>
<gene>
    <name type="primary">vapC8</name>
    <name type="ordered locus">MT0693</name>
</gene>
<sequence length="112" mass="11590">MTEGEVGVGLLDTSVFIARESGGAIADLPERVALSVMTIGELQLGLLNAGDSATRSRRADTLALARTADQIPVSEAVMISLARLVADCRAAGVRRSVKLTDALIAATAEIKV</sequence>
<name>VAPC8_MYCTO</name>
<protein>
    <recommendedName>
        <fullName>Ribonuclease VapC8</fullName>
        <shortName>RNase VapC8</shortName>
        <ecNumber>3.1.-.-</ecNumber>
    </recommendedName>
    <alternativeName>
        <fullName>Toxin VapC8</fullName>
    </alternativeName>
</protein>
<organism>
    <name type="scientific">Mycobacterium tuberculosis (strain CDC 1551 / Oshkosh)</name>
    <dbReference type="NCBI Taxonomy" id="83331"/>
    <lineage>
        <taxon>Bacteria</taxon>
        <taxon>Bacillati</taxon>
        <taxon>Actinomycetota</taxon>
        <taxon>Actinomycetes</taxon>
        <taxon>Mycobacteriales</taxon>
        <taxon>Mycobacteriaceae</taxon>
        <taxon>Mycobacterium</taxon>
        <taxon>Mycobacterium tuberculosis complex</taxon>
    </lineage>
</organism>